<reference key="1">
    <citation type="journal article" date="1994" name="Toxicon">
        <title>Primary structures of two proteins from the venom of the Mexican red knee tarantula (Brachypelma smithii).</title>
        <authorList>
            <person name="Kaiser I.I."/>
            <person name="Griffin P.R."/>
            <person name="Aird S.D."/>
            <person name="Hudiburg S."/>
            <person name="Shabanowitz J."/>
            <person name="Francis B."/>
            <person name="John T.R."/>
            <person name="Hunt D.F."/>
            <person name="Odell G.V."/>
        </authorList>
    </citation>
    <scope>PROTEIN SEQUENCE</scope>
    <scope>MASS SPECTROMETRY</scope>
    <scope>DISULFIDE BOND</scope>
    <source>
        <tissue>Venom</tissue>
    </source>
</reference>
<name>TXP5_BRASM</name>
<protein>
    <recommendedName>
        <fullName>U2-theraphotoxin-Bs1a</fullName>
        <shortName>U2-TRTX-Bs1a</shortName>
    </recommendedName>
    <alternativeName>
        <fullName>BsTX5</fullName>
    </alternativeName>
    <alternativeName>
        <fullName>TXP5</fullName>
    </alternativeName>
    <alternativeName>
        <fullName>Venom protein 5</fullName>
    </alternativeName>
</protein>
<organism>
    <name type="scientific">Brachypelma smithi</name>
    <name type="common">Mexican red knee tarantula</name>
    <name type="synonym">Eurypelma smithi</name>
    <dbReference type="NCBI Taxonomy" id="54074"/>
    <lineage>
        <taxon>Eukaryota</taxon>
        <taxon>Metazoa</taxon>
        <taxon>Ecdysozoa</taxon>
        <taxon>Arthropoda</taxon>
        <taxon>Chelicerata</taxon>
        <taxon>Arachnida</taxon>
        <taxon>Araneae</taxon>
        <taxon>Mygalomorphae</taxon>
        <taxon>Theraphosidae</taxon>
        <taxon>Brachypelma</taxon>
    </lineage>
</organism>
<evidence type="ECO:0000250" key="1"/>
<evidence type="ECO:0000269" key="2">
    <source>
    </source>
</evidence>
<evidence type="ECO:0000305" key="3"/>
<dbReference type="SMR" id="P49266"/>
<dbReference type="ArachnoServer" id="AS000406">
    <property type="toxin name" value="U2-theraphotoxin-Bs1a"/>
</dbReference>
<dbReference type="GO" id="GO:0005576">
    <property type="term" value="C:extracellular region"/>
    <property type="evidence" value="ECO:0007669"/>
    <property type="project" value="UniProtKB-SubCell"/>
</dbReference>
<dbReference type="GO" id="GO:0008200">
    <property type="term" value="F:ion channel inhibitor activity"/>
    <property type="evidence" value="ECO:0007669"/>
    <property type="project" value="InterPro"/>
</dbReference>
<dbReference type="GO" id="GO:0090729">
    <property type="term" value="F:toxin activity"/>
    <property type="evidence" value="ECO:0007669"/>
    <property type="project" value="UniProtKB-KW"/>
</dbReference>
<dbReference type="InterPro" id="IPR011696">
    <property type="entry name" value="Huwentoxin-1"/>
</dbReference>
<dbReference type="InterPro" id="IPR013140">
    <property type="entry name" value="Huwentoxin_CS1"/>
</dbReference>
<dbReference type="Pfam" id="PF07740">
    <property type="entry name" value="Toxin_12"/>
    <property type="match status" value="1"/>
</dbReference>
<dbReference type="SUPFAM" id="SSF57059">
    <property type="entry name" value="omega toxin-like"/>
    <property type="match status" value="1"/>
</dbReference>
<dbReference type="PROSITE" id="PS60021">
    <property type="entry name" value="HWTX_1"/>
    <property type="match status" value="1"/>
</dbReference>
<proteinExistence type="evidence at protein level"/>
<accession>P49266</accession>
<sequence>SCVDFQTKCKKDSDCCGKLECSSRWKWCVYPSPF</sequence>
<feature type="peptide" id="PRO_0000044999" description="U2-theraphotoxin-Bs1a">
    <location>
        <begin position="1"/>
        <end position="34"/>
    </location>
</feature>
<feature type="disulfide bond" evidence="1">
    <location>
        <begin position="2"/>
        <end position="16"/>
    </location>
</feature>
<feature type="disulfide bond" evidence="2">
    <location>
        <begin position="9"/>
        <end position="21"/>
    </location>
</feature>
<feature type="disulfide bond" evidence="1">
    <location>
        <begin position="15"/>
        <end position="28"/>
    </location>
</feature>
<keyword id="KW-0903">Direct protein sequencing</keyword>
<keyword id="KW-1015">Disulfide bond</keyword>
<keyword id="KW-0960">Knottin</keyword>
<keyword id="KW-0528">Neurotoxin</keyword>
<keyword id="KW-0964">Secreted</keyword>
<keyword id="KW-0800">Toxin</keyword>
<comment type="subcellular location">
    <subcellularLocation>
        <location>Secreted</location>
    </subcellularLocation>
</comment>
<comment type="tissue specificity">
    <text>Expressed by the venom gland.</text>
</comment>
<comment type="domain">
    <text evidence="1">The presence of a 'disulfide through disulfide knot' structurally defines this protein as a knottin.</text>
</comment>
<comment type="mass spectrometry"/>
<comment type="similarity">
    <text evidence="3">Belongs to the neurotoxin 10 (Hwtx-1) family. 03 (BsTX5) subfamily.</text>
</comment>